<name>MPK7_ORYSJ</name>
<protein>
    <recommendedName>
        <fullName>Mitogen-activated protein kinase 7</fullName>
        <shortName>MAP kinase 7</shortName>
        <ecNumber>2.7.11.24</ecNumber>
    </recommendedName>
    <alternativeName>
        <fullName>MAP kinase 6</fullName>
    </alternativeName>
    <alternativeName>
        <fullName>OsMAPK6</fullName>
    </alternativeName>
</protein>
<comment type="catalytic activity">
    <reaction>
        <text>L-seryl-[protein] + ATP = O-phospho-L-seryl-[protein] + ADP + H(+)</text>
        <dbReference type="Rhea" id="RHEA:17989"/>
        <dbReference type="Rhea" id="RHEA-COMP:9863"/>
        <dbReference type="Rhea" id="RHEA-COMP:11604"/>
        <dbReference type="ChEBI" id="CHEBI:15378"/>
        <dbReference type="ChEBI" id="CHEBI:29999"/>
        <dbReference type="ChEBI" id="CHEBI:30616"/>
        <dbReference type="ChEBI" id="CHEBI:83421"/>
        <dbReference type="ChEBI" id="CHEBI:456216"/>
        <dbReference type="EC" id="2.7.11.24"/>
    </reaction>
</comment>
<comment type="catalytic activity">
    <reaction>
        <text>L-threonyl-[protein] + ATP = O-phospho-L-threonyl-[protein] + ADP + H(+)</text>
        <dbReference type="Rhea" id="RHEA:46608"/>
        <dbReference type="Rhea" id="RHEA-COMP:11060"/>
        <dbReference type="Rhea" id="RHEA-COMP:11605"/>
        <dbReference type="ChEBI" id="CHEBI:15378"/>
        <dbReference type="ChEBI" id="CHEBI:30013"/>
        <dbReference type="ChEBI" id="CHEBI:30616"/>
        <dbReference type="ChEBI" id="CHEBI:61977"/>
        <dbReference type="ChEBI" id="CHEBI:456216"/>
        <dbReference type="EC" id="2.7.11.24"/>
    </reaction>
</comment>
<comment type="activity regulation">
    <text evidence="1">Activated by threonine and tyrosine phosphorylation.</text>
</comment>
<comment type="induction">
    <text evidence="4">By jasmonic acid (JA) and infection with rice blast fungus (M.grisea).</text>
</comment>
<comment type="domain">
    <text>The TXY motif contains the threonine and tyrosine residues whose phosphorylation activates the MAP kinases.</text>
</comment>
<comment type="PTM">
    <text evidence="1">Dually phosphorylated on Thr-175 and Tyr-177, which activates the enzyme.</text>
</comment>
<comment type="similarity">
    <text evidence="5">Belongs to the protein kinase superfamily. CMGC Ser/Thr protein kinase family. MAP kinase subfamily.</text>
</comment>
<proteinExistence type="evidence at transcript level"/>
<accession>Q67C40</accession>
<keyword id="KW-0067">ATP-binding</keyword>
<keyword id="KW-0418">Kinase</keyword>
<keyword id="KW-0547">Nucleotide-binding</keyword>
<keyword id="KW-0597">Phosphoprotein</keyword>
<keyword id="KW-1185">Reference proteome</keyword>
<keyword id="KW-0723">Serine/threonine-protein kinase</keyword>
<keyword id="KW-0808">Transferase</keyword>
<gene>
    <name type="primary">MPK7</name>
    <name type="synonym">MAPK6</name>
    <name type="ordered locus">Os05g0566400</name>
    <name type="ordered locus">LOC_Os05g49140</name>
    <name type="ORF">OJ1781_H11.5</name>
    <name type="ORF">OJ1781_H11.6</name>
</gene>
<feature type="chain" id="PRO_0000239750" description="Mitogen-activated protein kinase 7">
    <location>
        <begin position="1"/>
        <end position="569"/>
    </location>
</feature>
<feature type="domain" description="Protein kinase" evidence="2">
    <location>
        <begin position="13"/>
        <end position="304"/>
    </location>
</feature>
<feature type="region of interest" description="Disordered" evidence="3">
    <location>
        <begin position="401"/>
        <end position="420"/>
    </location>
</feature>
<feature type="short sequence motif" description="TXY">
    <location>
        <begin position="175"/>
        <end position="177"/>
    </location>
</feature>
<feature type="active site" description="Proton acceptor" evidence="2">
    <location>
        <position position="139"/>
    </location>
</feature>
<feature type="binding site" evidence="2">
    <location>
        <begin position="19"/>
        <end position="27"/>
    </location>
    <ligand>
        <name>ATP</name>
        <dbReference type="ChEBI" id="CHEBI:30616"/>
    </ligand>
</feature>
<feature type="binding site" evidence="2">
    <location>
        <position position="42"/>
    </location>
    <ligand>
        <name>ATP</name>
        <dbReference type="ChEBI" id="CHEBI:30616"/>
    </ligand>
</feature>
<feature type="modified residue" description="Phosphothreonine" evidence="1">
    <location>
        <position position="175"/>
    </location>
</feature>
<feature type="modified residue" description="Phosphotyrosine" evidence="1">
    <location>
        <position position="177"/>
    </location>
</feature>
<evidence type="ECO:0000250" key="1"/>
<evidence type="ECO:0000255" key="2">
    <source>
        <dbReference type="PROSITE-ProRule" id="PRU00159"/>
    </source>
</evidence>
<evidence type="ECO:0000256" key="3">
    <source>
        <dbReference type="SAM" id="MobiDB-lite"/>
    </source>
</evidence>
<evidence type="ECO:0000269" key="4">
    <source>
    </source>
</evidence>
<evidence type="ECO:0000305" key="5"/>
<sequence length="569" mass="64669">MDFFSEYGDSSRYKIQEIVGKGSYGVVCSAIDQHTGDKVAIKKIHNIFEHLSDAARILREIKLLRLLRHPDIVEIKHIMLPPSRRDFKDIYVVFELMDTDLHQVIKANDDLTKEHHQFFLYQMLRALKYIHTANVYHRDLKPKNILANANCKLKICDFGLARVAFNDTPTTVFWTDYVATRWYRAPELCGSFFSKYSPAIDTWSIGCIFAEILTGKPLFPGKNVVHQLDLMTDLLGTPSMDAISRIRNDKARRYLSSMRRKQPVPFSEKFPNVDPLALKLLQRLLAFDPKDRPTAEEALADPYFKGLAKVEREPSCQPISKMEFEFERRKVTKDDIKELIFREILEYHPQLLKDYMNGSENTSFLYPSAVDNFRRQFAILEENGGKSGALDRKHVSLPRATTVHSTSIPPNEGLDATSQVTQRIPTARPGRTVGPVLPFENPGAADPHSARRVVRNPMVPPAAANKSGYSYNLKSDYSDRQHQEELEKDRVQYRPAQHLMDAKVAPDTAPDIRSSQYYFTRSAPRTDLTDRAALQGSMLYGIAPFNGIAAVAGGYSKVGAVQYGVSRMY</sequence>
<dbReference type="EC" id="2.7.11.24"/>
<dbReference type="EMBL" id="AY366480">
    <property type="protein sequence ID" value="AAR11478.1"/>
    <property type="molecule type" value="mRNA"/>
</dbReference>
<dbReference type="EMBL" id="AC120986">
    <property type="status" value="NOT_ANNOTATED_CDS"/>
    <property type="molecule type" value="Genomic_DNA"/>
</dbReference>
<dbReference type="EMBL" id="AP014961">
    <property type="status" value="NOT_ANNOTATED_CDS"/>
    <property type="molecule type" value="Genomic_DNA"/>
</dbReference>
<dbReference type="SMR" id="Q67C40"/>
<dbReference type="FunCoup" id="Q67C40">
    <property type="interactions" value="197"/>
</dbReference>
<dbReference type="STRING" id="39947.Q67C40"/>
<dbReference type="PaxDb" id="39947-Q67C40"/>
<dbReference type="eggNOG" id="KOG0660">
    <property type="taxonomic scope" value="Eukaryota"/>
</dbReference>
<dbReference type="InParanoid" id="Q67C40"/>
<dbReference type="Proteomes" id="UP000000763">
    <property type="component" value="Chromosome 5"/>
</dbReference>
<dbReference type="Proteomes" id="UP000059680">
    <property type="component" value="Chromosome 5"/>
</dbReference>
<dbReference type="GO" id="GO:0005737">
    <property type="term" value="C:cytoplasm"/>
    <property type="evidence" value="ECO:0000318"/>
    <property type="project" value="GO_Central"/>
</dbReference>
<dbReference type="GO" id="GO:0005634">
    <property type="term" value="C:nucleus"/>
    <property type="evidence" value="ECO:0000318"/>
    <property type="project" value="GO_Central"/>
</dbReference>
<dbReference type="GO" id="GO:0005524">
    <property type="term" value="F:ATP binding"/>
    <property type="evidence" value="ECO:0007669"/>
    <property type="project" value="UniProtKB-KW"/>
</dbReference>
<dbReference type="GO" id="GO:0004707">
    <property type="term" value="F:MAP kinase activity"/>
    <property type="evidence" value="ECO:0007669"/>
    <property type="project" value="UniProtKB-EC"/>
</dbReference>
<dbReference type="GO" id="GO:0106310">
    <property type="term" value="F:protein serine kinase activity"/>
    <property type="evidence" value="ECO:0007669"/>
    <property type="project" value="RHEA"/>
</dbReference>
<dbReference type="GO" id="GO:0004674">
    <property type="term" value="F:protein serine/threonine kinase activity"/>
    <property type="evidence" value="ECO:0000318"/>
    <property type="project" value="GO_Central"/>
</dbReference>
<dbReference type="GO" id="GO:0035556">
    <property type="term" value="P:intracellular signal transduction"/>
    <property type="evidence" value="ECO:0000318"/>
    <property type="project" value="GO_Central"/>
</dbReference>
<dbReference type="CDD" id="cd07859">
    <property type="entry name" value="STKc_TDY_MAPK"/>
    <property type="match status" value="1"/>
</dbReference>
<dbReference type="FunFam" id="1.10.510.10:FF:000017">
    <property type="entry name" value="Mitogen-activated protein kinase"/>
    <property type="match status" value="1"/>
</dbReference>
<dbReference type="FunFam" id="3.30.200.20:FF:000046">
    <property type="entry name" value="Mitogen-activated protein kinase"/>
    <property type="match status" value="1"/>
</dbReference>
<dbReference type="Gene3D" id="3.30.200.20">
    <property type="entry name" value="Phosphorylase Kinase, domain 1"/>
    <property type="match status" value="1"/>
</dbReference>
<dbReference type="Gene3D" id="1.10.510.10">
    <property type="entry name" value="Transferase(Phosphotransferase) domain 1"/>
    <property type="match status" value="1"/>
</dbReference>
<dbReference type="InterPro" id="IPR011009">
    <property type="entry name" value="Kinase-like_dom_sf"/>
</dbReference>
<dbReference type="InterPro" id="IPR050117">
    <property type="entry name" value="MAP_kinase"/>
</dbReference>
<dbReference type="InterPro" id="IPR003527">
    <property type="entry name" value="MAP_kinase_CS"/>
</dbReference>
<dbReference type="InterPro" id="IPR000719">
    <property type="entry name" value="Prot_kinase_dom"/>
</dbReference>
<dbReference type="InterPro" id="IPR017441">
    <property type="entry name" value="Protein_kinase_ATP_BS"/>
</dbReference>
<dbReference type="PANTHER" id="PTHR24055">
    <property type="entry name" value="MITOGEN-ACTIVATED PROTEIN KINASE"/>
    <property type="match status" value="1"/>
</dbReference>
<dbReference type="Pfam" id="PF00069">
    <property type="entry name" value="Pkinase"/>
    <property type="match status" value="1"/>
</dbReference>
<dbReference type="SMART" id="SM00220">
    <property type="entry name" value="S_TKc"/>
    <property type="match status" value="1"/>
</dbReference>
<dbReference type="SUPFAM" id="SSF56112">
    <property type="entry name" value="Protein kinase-like (PK-like)"/>
    <property type="match status" value="1"/>
</dbReference>
<dbReference type="PROSITE" id="PS01351">
    <property type="entry name" value="MAPK"/>
    <property type="match status" value="1"/>
</dbReference>
<dbReference type="PROSITE" id="PS00107">
    <property type="entry name" value="PROTEIN_KINASE_ATP"/>
    <property type="match status" value="1"/>
</dbReference>
<dbReference type="PROSITE" id="PS50011">
    <property type="entry name" value="PROTEIN_KINASE_DOM"/>
    <property type="match status" value="1"/>
</dbReference>
<organism>
    <name type="scientific">Oryza sativa subsp. japonica</name>
    <name type="common">Rice</name>
    <dbReference type="NCBI Taxonomy" id="39947"/>
    <lineage>
        <taxon>Eukaryota</taxon>
        <taxon>Viridiplantae</taxon>
        <taxon>Streptophyta</taxon>
        <taxon>Embryophyta</taxon>
        <taxon>Tracheophyta</taxon>
        <taxon>Spermatophyta</taxon>
        <taxon>Magnoliopsida</taxon>
        <taxon>Liliopsida</taxon>
        <taxon>Poales</taxon>
        <taxon>Poaceae</taxon>
        <taxon>BOP clade</taxon>
        <taxon>Oryzoideae</taxon>
        <taxon>Oryzeae</taxon>
        <taxon>Oryzinae</taxon>
        <taxon>Oryza</taxon>
        <taxon>Oryza sativa</taxon>
    </lineage>
</organism>
<reference key="1">
    <citation type="submission" date="2003-08" db="EMBL/GenBank/DDBJ databases">
        <title>A novel MAP kinase-OsMAPK6 involved in the developmental regulation for rice plants.</title>
        <authorList>
            <person name="Wang Y.D."/>
            <person name="Chen X."/>
            <person name="Ye Z."/>
            <person name="Wei M.L."/>
        </authorList>
    </citation>
    <scope>NUCLEOTIDE SEQUENCE [MRNA]</scope>
</reference>
<reference key="2">
    <citation type="journal article" date="2005" name="Mol. Genet. Genomics">
        <title>A fine physical map of the rice chromosome 5.</title>
        <authorList>
            <person name="Cheng C.-H."/>
            <person name="Chung M.C."/>
            <person name="Liu S.-M."/>
            <person name="Chen S.-K."/>
            <person name="Kao F.Y."/>
            <person name="Lin S.-J."/>
            <person name="Hsiao S.-H."/>
            <person name="Tseng I.C."/>
            <person name="Hsing Y.-I.C."/>
            <person name="Wu H.-P."/>
            <person name="Chen C.-S."/>
            <person name="Shaw J.-F."/>
            <person name="Wu J."/>
            <person name="Matsumoto T."/>
            <person name="Sasaki T."/>
            <person name="Chen H.-C."/>
            <person name="Chow T.-Y."/>
        </authorList>
    </citation>
    <scope>NUCLEOTIDE SEQUENCE [LARGE SCALE GENOMIC DNA]</scope>
    <source>
        <strain>cv. Nipponbare</strain>
    </source>
</reference>
<reference key="3">
    <citation type="journal article" date="2005" name="Nature">
        <title>The map-based sequence of the rice genome.</title>
        <authorList>
            <consortium name="International rice genome sequencing project (IRGSP)"/>
        </authorList>
    </citation>
    <scope>NUCLEOTIDE SEQUENCE [LARGE SCALE GENOMIC DNA]</scope>
    <source>
        <strain>cv. Nipponbare</strain>
    </source>
</reference>
<reference key="4">
    <citation type="journal article" date="2013" name="Rice">
        <title>Improvement of the Oryza sativa Nipponbare reference genome using next generation sequence and optical map data.</title>
        <authorList>
            <person name="Kawahara Y."/>
            <person name="de la Bastide M."/>
            <person name="Hamilton J.P."/>
            <person name="Kanamori H."/>
            <person name="McCombie W.R."/>
            <person name="Ouyang S."/>
            <person name="Schwartz D.C."/>
            <person name="Tanaka T."/>
            <person name="Wu J."/>
            <person name="Zhou S."/>
            <person name="Childs K.L."/>
            <person name="Davidson R.M."/>
            <person name="Lin H."/>
            <person name="Quesada-Ocampo L."/>
            <person name="Vaillancourt B."/>
            <person name="Sakai H."/>
            <person name="Lee S.S."/>
            <person name="Kim J."/>
            <person name="Numa H."/>
            <person name="Itoh T."/>
            <person name="Buell C.R."/>
            <person name="Matsumoto T."/>
        </authorList>
    </citation>
    <scope>GENOME REANNOTATION</scope>
    <source>
        <strain>cv. Nipponbare</strain>
    </source>
</reference>
<reference key="5">
    <citation type="journal article" date="2006" name="Mol. Plant Microbe Interact.">
        <title>Molecular analysis of the rice MAP kinase gene family in relation to Magnaporthe grisea infection.</title>
        <authorList>
            <person name="Reyna N.S."/>
            <person name="Yang Y."/>
        </authorList>
    </citation>
    <scope>INDUCTION</scope>
    <scope>NOMENCLATURE</scope>
</reference>